<organism>
    <name type="scientific">Rattus norvegicus</name>
    <name type="common">Rat</name>
    <dbReference type="NCBI Taxonomy" id="10116"/>
    <lineage>
        <taxon>Eukaryota</taxon>
        <taxon>Metazoa</taxon>
        <taxon>Chordata</taxon>
        <taxon>Craniata</taxon>
        <taxon>Vertebrata</taxon>
        <taxon>Euteleostomi</taxon>
        <taxon>Mammalia</taxon>
        <taxon>Eutheria</taxon>
        <taxon>Euarchontoglires</taxon>
        <taxon>Glires</taxon>
        <taxon>Rodentia</taxon>
        <taxon>Myomorpha</taxon>
        <taxon>Muroidea</taxon>
        <taxon>Muridae</taxon>
        <taxon>Murinae</taxon>
        <taxon>Rattus</taxon>
    </lineage>
</organism>
<keyword id="KW-0325">Glycoprotein</keyword>
<keyword id="KW-1185">Reference proteome</keyword>
<keyword id="KW-0964">Secreted</keyword>
<feature type="chain" id="PRO_0000032488" description="Serpin B5">
    <location>
        <begin position="1"/>
        <end position="375"/>
    </location>
</feature>
<feature type="site" description="Reactive bond homolog" evidence="1">
    <location>
        <begin position="340"/>
        <end position="341"/>
    </location>
</feature>
<feature type="glycosylation site" description="N-linked (GlcNAc...) asparagine" evidence="2">
    <location>
        <position position="99"/>
    </location>
</feature>
<feature type="glycosylation site" description="N-linked (GlcNAc...) asparagine" evidence="2">
    <location>
        <position position="133"/>
    </location>
</feature>
<feature type="glycosylation site" description="N-linked (GlcNAc...) asparagine" evidence="2">
    <location>
        <position position="188"/>
    </location>
</feature>
<feature type="glycosylation site" description="N-linked (GlcNAc...) asparagine" evidence="2">
    <location>
        <position position="298"/>
    </location>
</feature>
<feature type="glycosylation site" description="N-linked (GlcNAc...) asparagine" evidence="2">
    <location>
        <position position="361"/>
    </location>
</feature>
<sequence>MDALRLANSAFAVELFKQLCEKEPAGNILFSPICLSTSLSLAQVGAKGDTANEIGQVLHFENVKDVPFGFKPITSDVNKLSSFYSLKLIKRLYIDKSLNLSTEFISSTKRPYANELETVDFKDKLEETKGQINSSIKELTDGHFEDILPENSISDQTKILVVNAAYFVGKWMKKFPESETKECPFRINKTDTKPVQMMNLEATFCLGNIDDINCKIIELPFQNKHLSMLIVLPKDVEDESTGLEKIEKQLNPETLLQWTNPSTMANAKVKLSLPKFKVEKMIDPKASLESLGLKSLFNESTSDFSGMSETKGVSVSNVIHRVCLEITEDGGDSIEVPGSRILQHKDEFKADHPFLFIVRHNKTRNIVFLGKFSSP</sequence>
<comment type="function">
    <text evidence="1">Tumor suppressor. It blocks the growth, invasion, and metastatic properties of mammary tumors. As it does not undergo the S (stressed) to R (relaxed) conformational transition characteristic of active serpins, it exhibits no serine protease inhibitory activity (By similarity).</text>
</comment>
<comment type="subunit">
    <text evidence="1">Interacts with IRF6.</text>
</comment>
<comment type="subcellular location">
    <subcellularLocation>
        <location>Secreted</location>
        <location>Extracellular space</location>
    </subcellularLocation>
</comment>
<comment type="similarity">
    <text evidence="3">Belongs to the serpin family. Ov-serpin subfamily.</text>
</comment>
<reference key="1">
    <citation type="journal article" date="1997" name="Cancer Lett.">
        <title>Rat and human maspins: structures, metastatic suppressor activity and mutation in prostate cancer cells.</title>
        <authorList>
            <person name="Umekita Y."/>
            <person name="Hiipakka R.A."/>
            <person name="Liao S."/>
        </authorList>
    </citation>
    <scope>NUCLEOTIDE SEQUENCE [MRNA]</scope>
    <source>
        <strain>Sprague-Dawley</strain>
        <tissue>Vagina</tissue>
    </source>
</reference>
<accession>P70564</accession>
<evidence type="ECO:0000250" key="1"/>
<evidence type="ECO:0000255" key="2"/>
<evidence type="ECO:0000305" key="3"/>
<dbReference type="EMBL" id="U58857">
    <property type="protein sequence ID" value="AAB06043.1"/>
    <property type="molecule type" value="mRNA"/>
</dbReference>
<dbReference type="RefSeq" id="NP_476449.1">
    <property type="nucleotide sequence ID" value="NM_057108.2"/>
</dbReference>
<dbReference type="SMR" id="P70564"/>
<dbReference type="FunCoup" id="P70564">
    <property type="interactions" value="128"/>
</dbReference>
<dbReference type="STRING" id="10116.ENSRNOP00000003625"/>
<dbReference type="MEROPS" id="I04.980"/>
<dbReference type="GlyCosmos" id="P70564">
    <property type="glycosylation" value="5 sites, No reported glycans"/>
</dbReference>
<dbReference type="GlyGen" id="P70564">
    <property type="glycosylation" value="5 sites"/>
</dbReference>
<dbReference type="iPTMnet" id="P70564"/>
<dbReference type="PhosphoSitePlus" id="P70564"/>
<dbReference type="PaxDb" id="10116-ENSRNOP00000003625"/>
<dbReference type="GeneID" id="116589"/>
<dbReference type="KEGG" id="rno:116589"/>
<dbReference type="UCSC" id="RGD:69342">
    <property type="organism name" value="rat"/>
</dbReference>
<dbReference type="AGR" id="RGD:69342"/>
<dbReference type="CTD" id="5268"/>
<dbReference type="RGD" id="69342">
    <property type="gene designation" value="Serpinb5"/>
</dbReference>
<dbReference type="eggNOG" id="KOG2392">
    <property type="taxonomic scope" value="Eukaryota"/>
</dbReference>
<dbReference type="InParanoid" id="P70564"/>
<dbReference type="PhylomeDB" id="P70564"/>
<dbReference type="PRO" id="PR:P70564"/>
<dbReference type="Proteomes" id="UP000002494">
    <property type="component" value="Unplaced"/>
</dbReference>
<dbReference type="GO" id="GO:0001533">
    <property type="term" value="C:cornified envelope"/>
    <property type="evidence" value="ECO:0000266"/>
    <property type="project" value="RGD"/>
</dbReference>
<dbReference type="GO" id="GO:0005737">
    <property type="term" value="C:cytoplasm"/>
    <property type="evidence" value="ECO:0000266"/>
    <property type="project" value="RGD"/>
</dbReference>
<dbReference type="GO" id="GO:0005615">
    <property type="term" value="C:extracellular space"/>
    <property type="evidence" value="ECO:0000318"/>
    <property type="project" value="GO_Central"/>
</dbReference>
<dbReference type="GO" id="GO:0016528">
    <property type="term" value="C:sarcoplasm"/>
    <property type="evidence" value="ECO:0000266"/>
    <property type="project" value="RGD"/>
</dbReference>
<dbReference type="GO" id="GO:0004867">
    <property type="term" value="F:serine-type endopeptidase inhibitor activity"/>
    <property type="evidence" value="ECO:0000318"/>
    <property type="project" value="GO_Central"/>
</dbReference>
<dbReference type="GO" id="GO:0030198">
    <property type="term" value="P:extracellular matrix organization"/>
    <property type="evidence" value="ECO:0000266"/>
    <property type="project" value="RGD"/>
</dbReference>
<dbReference type="GO" id="GO:0002009">
    <property type="term" value="P:morphogenesis of an epithelium"/>
    <property type="evidence" value="ECO:0000266"/>
    <property type="project" value="RGD"/>
</dbReference>
<dbReference type="GO" id="GO:0060512">
    <property type="term" value="P:prostate gland morphogenesis"/>
    <property type="evidence" value="ECO:0000266"/>
    <property type="project" value="RGD"/>
</dbReference>
<dbReference type="GO" id="GO:0050678">
    <property type="term" value="P:regulation of epithelial cell proliferation"/>
    <property type="evidence" value="ECO:0000266"/>
    <property type="project" value="RGD"/>
</dbReference>
<dbReference type="CDD" id="cd02057">
    <property type="entry name" value="serpinB5_maspin"/>
    <property type="match status" value="1"/>
</dbReference>
<dbReference type="FunFam" id="3.30.497.10:FF:000009">
    <property type="entry name" value="serpin B5 isoform X2"/>
    <property type="match status" value="1"/>
</dbReference>
<dbReference type="FunFam" id="2.30.39.10:FF:000014">
    <property type="entry name" value="Serpin family B member 9"/>
    <property type="match status" value="1"/>
</dbReference>
<dbReference type="Gene3D" id="2.30.39.10">
    <property type="entry name" value="Alpha-1-antitrypsin, domain 1"/>
    <property type="match status" value="1"/>
</dbReference>
<dbReference type="Gene3D" id="3.30.497.10">
    <property type="entry name" value="Antithrombin, subunit I, domain 2"/>
    <property type="match status" value="1"/>
</dbReference>
<dbReference type="InterPro" id="IPR000240">
    <property type="entry name" value="Serpin_B9/Maspin"/>
</dbReference>
<dbReference type="InterPro" id="IPR023795">
    <property type="entry name" value="Serpin_CS"/>
</dbReference>
<dbReference type="InterPro" id="IPR023796">
    <property type="entry name" value="Serpin_dom"/>
</dbReference>
<dbReference type="InterPro" id="IPR000215">
    <property type="entry name" value="Serpin_fam"/>
</dbReference>
<dbReference type="InterPro" id="IPR036186">
    <property type="entry name" value="Serpin_sf"/>
</dbReference>
<dbReference type="InterPro" id="IPR042178">
    <property type="entry name" value="Serpin_sf_1"/>
</dbReference>
<dbReference type="InterPro" id="IPR042185">
    <property type="entry name" value="Serpin_sf_2"/>
</dbReference>
<dbReference type="InterPro" id="IPR033836">
    <property type="entry name" value="SERPINB5_serpin_dom"/>
</dbReference>
<dbReference type="PANTHER" id="PTHR11461">
    <property type="entry name" value="SERINE PROTEASE INHIBITOR, SERPIN"/>
    <property type="match status" value="1"/>
</dbReference>
<dbReference type="PANTHER" id="PTHR11461:SF55">
    <property type="entry name" value="SERPIN B5"/>
    <property type="match status" value="1"/>
</dbReference>
<dbReference type="Pfam" id="PF00079">
    <property type="entry name" value="Serpin"/>
    <property type="match status" value="1"/>
</dbReference>
<dbReference type="PRINTS" id="PR00676">
    <property type="entry name" value="MASPIN"/>
</dbReference>
<dbReference type="SMART" id="SM00093">
    <property type="entry name" value="SERPIN"/>
    <property type="match status" value="1"/>
</dbReference>
<dbReference type="SUPFAM" id="SSF56574">
    <property type="entry name" value="Serpins"/>
    <property type="match status" value="1"/>
</dbReference>
<dbReference type="PROSITE" id="PS00284">
    <property type="entry name" value="SERPIN"/>
    <property type="match status" value="1"/>
</dbReference>
<protein>
    <recommendedName>
        <fullName>Serpin B5</fullName>
    </recommendedName>
    <alternativeName>
        <fullName>Maspin</fullName>
    </alternativeName>
    <alternativeName>
        <fullName>Peptidase inhibitor 5</fullName>
        <shortName>PI-5</shortName>
    </alternativeName>
</protein>
<gene>
    <name type="primary">Serpinb5</name>
    <name type="synonym">Pi5</name>
</gene>
<proteinExistence type="evidence at transcript level"/>
<name>SPB5_RAT</name>